<gene>
    <name evidence="1" type="primary">hemH</name>
    <name type="ordered locus">RB8233</name>
</gene>
<comment type="function">
    <text evidence="1">Catalyzes the ferrous insertion into protoporphyrin IX.</text>
</comment>
<comment type="catalytic activity">
    <reaction evidence="1">
        <text>heme b + 2 H(+) = protoporphyrin IX + Fe(2+)</text>
        <dbReference type="Rhea" id="RHEA:22584"/>
        <dbReference type="ChEBI" id="CHEBI:15378"/>
        <dbReference type="ChEBI" id="CHEBI:29033"/>
        <dbReference type="ChEBI" id="CHEBI:57306"/>
        <dbReference type="ChEBI" id="CHEBI:60344"/>
        <dbReference type="EC" id="4.98.1.1"/>
    </reaction>
</comment>
<comment type="pathway">
    <text evidence="1">Porphyrin-containing compound metabolism; protoheme biosynthesis; protoheme from protoporphyrin-IX: step 1/1.</text>
</comment>
<comment type="subcellular location">
    <subcellularLocation>
        <location evidence="1">Cytoplasm</location>
    </subcellularLocation>
</comment>
<comment type="similarity">
    <text evidence="1">Belongs to the ferrochelatase family.</text>
</comment>
<dbReference type="EC" id="4.98.1.1" evidence="1"/>
<dbReference type="EMBL" id="BX294147">
    <property type="protein sequence ID" value="CAD78532.1"/>
    <property type="molecule type" value="Genomic_DNA"/>
</dbReference>
<dbReference type="RefSeq" id="NP_868254.1">
    <property type="nucleotide sequence ID" value="NC_005027.1"/>
</dbReference>
<dbReference type="RefSeq" id="WP_011121766.1">
    <property type="nucleotide sequence ID" value="NC_005027.1"/>
</dbReference>
<dbReference type="SMR" id="Q7UFZ7"/>
<dbReference type="STRING" id="243090.RB8233"/>
<dbReference type="EnsemblBacteria" id="CAD78532">
    <property type="protein sequence ID" value="CAD78532"/>
    <property type="gene ID" value="RB8233"/>
</dbReference>
<dbReference type="KEGG" id="rba:RB8233"/>
<dbReference type="PATRIC" id="fig|243090.15.peg.3968"/>
<dbReference type="eggNOG" id="COG0276">
    <property type="taxonomic scope" value="Bacteria"/>
</dbReference>
<dbReference type="HOGENOM" id="CLU_018884_2_0_0"/>
<dbReference type="InParanoid" id="Q7UFZ7"/>
<dbReference type="OrthoDB" id="9776380at2"/>
<dbReference type="UniPathway" id="UPA00252">
    <property type="reaction ID" value="UER00325"/>
</dbReference>
<dbReference type="Proteomes" id="UP000001025">
    <property type="component" value="Chromosome"/>
</dbReference>
<dbReference type="GO" id="GO:0005737">
    <property type="term" value="C:cytoplasm"/>
    <property type="evidence" value="ECO:0007669"/>
    <property type="project" value="UniProtKB-SubCell"/>
</dbReference>
<dbReference type="GO" id="GO:0004325">
    <property type="term" value="F:ferrochelatase activity"/>
    <property type="evidence" value="ECO:0000318"/>
    <property type="project" value="GO_Central"/>
</dbReference>
<dbReference type="GO" id="GO:0046872">
    <property type="term" value="F:metal ion binding"/>
    <property type="evidence" value="ECO:0007669"/>
    <property type="project" value="UniProtKB-KW"/>
</dbReference>
<dbReference type="GO" id="GO:0006783">
    <property type="term" value="P:heme biosynthetic process"/>
    <property type="evidence" value="ECO:0000318"/>
    <property type="project" value="GO_Central"/>
</dbReference>
<dbReference type="CDD" id="cd00419">
    <property type="entry name" value="Ferrochelatase_C"/>
    <property type="match status" value="1"/>
</dbReference>
<dbReference type="CDD" id="cd03411">
    <property type="entry name" value="Ferrochelatase_N"/>
    <property type="match status" value="1"/>
</dbReference>
<dbReference type="FunFam" id="3.40.50.1400:FF:000008">
    <property type="entry name" value="Ferrochelatase"/>
    <property type="match status" value="1"/>
</dbReference>
<dbReference type="Gene3D" id="3.40.50.1400">
    <property type="match status" value="2"/>
</dbReference>
<dbReference type="HAMAP" id="MF_00323">
    <property type="entry name" value="Ferrochelatase"/>
    <property type="match status" value="1"/>
</dbReference>
<dbReference type="InterPro" id="IPR001015">
    <property type="entry name" value="Ferrochelatase"/>
</dbReference>
<dbReference type="InterPro" id="IPR033644">
    <property type="entry name" value="Ferrochelatase_C"/>
</dbReference>
<dbReference type="InterPro" id="IPR033659">
    <property type="entry name" value="Ferrochelatase_N"/>
</dbReference>
<dbReference type="NCBIfam" id="TIGR00109">
    <property type="entry name" value="hemH"/>
    <property type="match status" value="1"/>
</dbReference>
<dbReference type="NCBIfam" id="NF000689">
    <property type="entry name" value="PRK00035.2-1"/>
    <property type="match status" value="1"/>
</dbReference>
<dbReference type="PANTHER" id="PTHR11108">
    <property type="entry name" value="FERROCHELATASE"/>
    <property type="match status" value="1"/>
</dbReference>
<dbReference type="PANTHER" id="PTHR11108:SF1">
    <property type="entry name" value="FERROCHELATASE, MITOCHONDRIAL"/>
    <property type="match status" value="1"/>
</dbReference>
<dbReference type="Pfam" id="PF00762">
    <property type="entry name" value="Ferrochelatase"/>
    <property type="match status" value="1"/>
</dbReference>
<dbReference type="SUPFAM" id="SSF53800">
    <property type="entry name" value="Chelatase"/>
    <property type="match status" value="1"/>
</dbReference>
<sequence>MSELPPYDSFLLVSFGGPEGQDDVMPFLENVLRGKNVPRERMLEVAEHYKHFGGVSPINEQNRQLIAALQKRFDANGIDLPIYWGNRNWDPYFADTLRQMKADGKKRSLAFFTSMFSCYSGCRQYRENIIQAREEVGEGAPLVEKVRMGFNHPGFIAAMADNVSKAAQTIGASPARTKVLFTAHSIPMGMADNCDYEKQLRESCRLVADACGAVDWDLVYQSRSGPPSQPWLEPDVLDAIAEMDDAKKLESLVILPIGFVSDHMEVLFDLDEEAAQLCRERGIKMARASAAGTHPDFVEMICGLVQERLGKLNEKPALGELGPWHDVCPQDCCLYTPRRPPVAGGRPVQAN</sequence>
<accession>Q7UFZ7</accession>
<organism>
    <name type="scientific">Rhodopirellula baltica (strain DSM 10527 / NCIMB 13988 / SH1)</name>
    <dbReference type="NCBI Taxonomy" id="243090"/>
    <lineage>
        <taxon>Bacteria</taxon>
        <taxon>Pseudomonadati</taxon>
        <taxon>Planctomycetota</taxon>
        <taxon>Planctomycetia</taxon>
        <taxon>Pirellulales</taxon>
        <taxon>Pirellulaceae</taxon>
        <taxon>Rhodopirellula</taxon>
    </lineage>
</organism>
<name>HEMH_RHOBA</name>
<protein>
    <recommendedName>
        <fullName evidence="1">Ferrochelatase</fullName>
        <ecNumber evidence="1">4.98.1.1</ecNumber>
    </recommendedName>
    <alternativeName>
        <fullName evidence="1">Heme synthase</fullName>
    </alternativeName>
    <alternativeName>
        <fullName evidence="1">Protoheme ferro-lyase</fullName>
    </alternativeName>
</protein>
<keyword id="KW-0963">Cytoplasm</keyword>
<keyword id="KW-0350">Heme biosynthesis</keyword>
<keyword id="KW-0408">Iron</keyword>
<keyword id="KW-0456">Lyase</keyword>
<keyword id="KW-0479">Metal-binding</keyword>
<keyword id="KW-0627">Porphyrin biosynthesis</keyword>
<keyword id="KW-1185">Reference proteome</keyword>
<proteinExistence type="inferred from homology"/>
<evidence type="ECO:0000255" key="1">
    <source>
        <dbReference type="HAMAP-Rule" id="MF_00323"/>
    </source>
</evidence>
<feature type="chain" id="PRO_0000175190" description="Ferrochelatase">
    <location>
        <begin position="1"/>
        <end position="351"/>
    </location>
</feature>
<feature type="binding site" evidence="1">
    <location>
        <position position="184"/>
    </location>
    <ligand>
        <name>Fe cation</name>
        <dbReference type="ChEBI" id="CHEBI:24875"/>
    </ligand>
</feature>
<feature type="binding site" evidence="1">
    <location>
        <position position="265"/>
    </location>
    <ligand>
        <name>Fe cation</name>
        <dbReference type="ChEBI" id="CHEBI:24875"/>
    </ligand>
</feature>
<reference key="1">
    <citation type="journal article" date="2003" name="Proc. Natl. Acad. Sci. U.S.A.">
        <title>Complete genome sequence of the marine planctomycete Pirellula sp. strain 1.</title>
        <authorList>
            <person name="Gloeckner F.O."/>
            <person name="Kube M."/>
            <person name="Bauer M."/>
            <person name="Teeling H."/>
            <person name="Lombardot T."/>
            <person name="Ludwig W."/>
            <person name="Gade D."/>
            <person name="Beck A."/>
            <person name="Borzym K."/>
            <person name="Heitmann K."/>
            <person name="Rabus R."/>
            <person name="Schlesner H."/>
            <person name="Amann R."/>
            <person name="Reinhardt R."/>
        </authorList>
    </citation>
    <scope>NUCLEOTIDE SEQUENCE [LARGE SCALE GENOMIC DNA]</scope>
    <source>
        <strain>DSM 10527 / NCIMB 13988 / SH1</strain>
    </source>
</reference>